<sequence>MSHRIDNLPNVFNLPFKPNFACELDLQKQGFLYIAGVDEVGRGPLAGPVVTAAVILDKNRIPDGLNDSKKLSAQRRYELYHEILQSALAISIASLCARTIDQSDIRKATLEAMRRCIRGLAVPAHYALVDGRDIPFQLPCPATALIKGDQRSVSIAAASIIAKVTRDQMMECAGQVYKGYGLEKHVGYATLAHRAALEKYGPVVGLHRYSFAPLKKRYRDYMS</sequence>
<evidence type="ECO:0000255" key="1">
    <source>
        <dbReference type="HAMAP-Rule" id="MF_00052"/>
    </source>
</evidence>
<evidence type="ECO:0000255" key="2">
    <source>
        <dbReference type="PROSITE-ProRule" id="PRU01319"/>
    </source>
</evidence>
<comment type="function">
    <text evidence="1">Endonuclease that specifically degrades the RNA of RNA-DNA hybrids.</text>
</comment>
<comment type="catalytic activity">
    <reaction evidence="1">
        <text>Endonucleolytic cleavage to 5'-phosphomonoester.</text>
        <dbReference type="EC" id="3.1.26.4"/>
    </reaction>
</comment>
<comment type="cofactor">
    <cofactor evidence="1">
        <name>Mn(2+)</name>
        <dbReference type="ChEBI" id="CHEBI:29035"/>
    </cofactor>
    <cofactor evidence="1">
        <name>Mg(2+)</name>
        <dbReference type="ChEBI" id="CHEBI:18420"/>
    </cofactor>
    <text evidence="1">Manganese or magnesium. Binds 1 divalent metal ion per monomer in the absence of substrate. May bind a second metal ion after substrate binding.</text>
</comment>
<comment type="subcellular location">
    <subcellularLocation>
        <location evidence="1">Cytoplasm</location>
    </subcellularLocation>
</comment>
<comment type="similarity">
    <text evidence="1">Belongs to the RNase HII family.</text>
</comment>
<reference key="1">
    <citation type="journal article" date="2004" name="Proc. Natl. Acad. Sci. U.S.A.">
        <title>The louse-borne human pathogen Bartonella quintana is a genomic derivative of the zoonotic agent Bartonella henselae.</title>
        <authorList>
            <person name="Alsmark U.C.M."/>
            <person name="Frank A.C."/>
            <person name="Karlberg E.O."/>
            <person name="Legault B.-A."/>
            <person name="Ardell D.H."/>
            <person name="Canbaeck B."/>
            <person name="Eriksson A.-S."/>
            <person name="Naeslund A.K."/>
            <person name="Handley S.A."/>
            <person name="Huvet M."/>
            <person name="La Scola B."/>
            <person name="Holmberg M."/>
            <person name="Andersson S.G.E."/>
        </authorList>
    </citation>
    <scope>NUCLEOTIDE SEQUENCE [LARGE SCALE GENOMIC DNA]</scope>
    <source>
        <strain>ATCC 49882 / DSM 28221 / CCUG 30454 / Houston 1</strain>
    </source>
</reference>
<protein>
    <recommendedName>
        <fullName evidence="1">Ribonuclease HII</fullName>
        <shortName evidence="1">RNase HII</shortName>
        <ecNumber evidence="1">3.1.26.4</ecNumber>
    </recommendedName>
</protein>
<dbReference type="EC" id="3.1.26.4" evidence="1"/>
<dbReference type="EMBL" id="BX897699">
    <property type="protein sequence ID" value="CAF27232.1"/>
    <property type="molecule type" value="Genomic_DNA"/>
</dbReference>
<dbReference type="RefSeq" id="WP_011180356.1">
    <property type="nucleotide sequence ID" value="NZ_LRIJ02000001.1"/>
</dbReference>
<dbReference type="SMR" id="Q6G4E3"/>
<dbReference type="PaxDb" id="283166-BH04230"/>
<dbReference type="EnsemblBacteria" id="CAF27232">
    <property type="protein sequence ID" value="CAF27232"/>
    <property type="gene ID" value="BH04230"/>
</dbReference>
<dbReference type="KEGG" id="bhe:BH04230"/>
<dbReference type="eggNOG" id="COG0164">
    <property type="taxonomic scope" value="Bacteria"/>
</dbReference>
<dbReference type="OrthoDB" id="9803420at2"/>
<dbReference type="Proteomes" id="UP000000421">
    <property type="component" value="Chromosome"/>
</dbReference>
<dbReference type="GO" id="GO:0005737">
    <property type="term" value="C:cytoplasm"/>
    <property type="evidence" value="ECO:0007669"/>
    <property type="project" value="UniProtKB-SubCell"/>
</dbReference>
<dbReference type="GO" id="GO:0032299">
    <property type="term" value="C:ribonuclease H2 complex"/>
    <property type="evidence" value="ECO:0007669"/>
    <property type="project" value="TreeGrafter"/>
</dbReference>
<dbReference type="GO" id="GO:0030145">
    <property type="term" value="F:manganese ion binding"/>
    <property type="evidence" value="ECO:0007669"/>
    <property type="project" value="UniProtKB-UniRule"/>
</dbReference>
<dbReference type="GO" id="GO:0003723">
    <property type="term" value="F:RNA binding"/>
    <property type="evidence" value="ECO:0007669"/>
    <property type="project" value="InterPro"/>
</dbReference>
<dbReference type="GO" id="GO:0004523">
    <property type="term" value="F:RNA-DNA hybrid ribonuclease activity"/>
    <property type="evidence" value="ECO:0007669"/>
    <property type="project" value="UniProtKB-UniRule"/>
</dbReference>
<dbReference type="GO" id="GO:0043137">
    <property type="term" value="P:DNA replication, removal of RNA primer"/>
    <property type="evidence" value="ECO:0007669"/>
    <property type="project" value="TreeGrafter"/>
</dbReference>
<dbReference type="GO" id="GO:0006298">
    <property type="term" value="P:mismatch repair"/>
    <property type="evidence" value="ECO:0007669"/>
    <property type="project" value="TreeGrafter"/>
</dbReference>
<dbReference type="CDD" id="cd07182">
    <property type="entry name" value="RNase_HII_bacteria_HII_like"/>
    <property type="match status" value="1"/>
</dbReference>
<dbReference type="Gene3D" id="3.30.420.10">
    <property type="entry name" value="Ribonuclease H-like superfamily/Ribonuclease H"/>
    <property type="match status" value="1"/>
</dbReference>
<dbReference type="HAMAP" id="MF_00052_B">
    <property type="entry name" value="RNase_HII_B"/>
    <property type="match status" value="1"/>
</dbReference>
<dbReference type="InterPro" id="IPR022898">
    <property type="entry name" value="RNase_HII"/>
</dbReference>
<dbReference type="InterPro" id="IPR001352">
    <property type="entry name" value="RNase_HII/HIII"/>
</dbReference>
<dbReference type="InterPro" id="IPR024567">
    <property type="entry name" value="RNase_HII/HIII_dom"/>
</dbReference>
<dbReference type="InterPro" id="IPR012337">
    <property type="entry name" value="RNaseH-like_sf"/>
</dbReference>
<dbReference type="InterPro" id="IPR036397">
    <property type="entry name" value="RNaseH_sf"/>
</dbReference>
<dbReference type="NCBIfam" id="NF000595">
    <property type="entry name" value="PRK00015.1-3"/>
    <property type="match status" value="1"/>
</dbReference>
<dbReference type="PANTHER" id="PTHR10954">
    <property type="entry name" value="RIBONUCLEASE H2 SUBUNIT A"/>
    <property type="match status" value="1"/>
</dbReference>
<dbReference type="PANTHER" id="PTHR10954:SF18">
    <property type="entry name" value="RIBONUCLEASE HII"/>
    <property type="match status" value="1"/>
</dbReference>
<dbReference type="Pfam" id="PF01351">
    <property type="entry name" value="RNase_HII"/>
    <property type="match status" value="1"/>
</dbReference>
<dbReference type="SUPFAM" id="SSF53098">
    <property type="entry name" value="Ribonuclease H-like"/>
    <property type="match status" value="1"/>
</dbReference>
<dbReference type="PROSITE" id="PS51975">
    <property type="entry name" value="RNASE_H_2"/>
    <property type="match status" value="1"/>
</dbReference>
<proteinExistence type="inferred from homology"/>
<name>RNH2_BARHE</name>
<feature type="chain" id="PRO_0000235699" description="Ribonuclease HII">
    <location>
        <begin position="1"/>
        <end position="223"/>
    </location>
</feature>
<feature type="domain" description="RNase H type-2" evidence="2">
    <location>
        <begin position="32"/>
        <end position="223"/>
    </location>
</feature>
<feature type="binding site" evidence="1">
    <location>
        <position position="38"/>
    </location>
    <ligand>
        <name>a divalent metal cation</name>
        <dbReference type="ChEBI" id="CHEBI:60240"/>
    </ligand>
</feature>
<feature type="binding site" evidence="1">
    <location>
        <position position="39"/>
    </location>
    <ligand>
        <name>a divalent metal cation</name>
        <dbReference type="ChEBI" id="CHEBI:60240"/>
    </ligand>
</feature>
<feature type="binding site" evidence="1">
    <location>
        <position position="130"/>
    </location>
    <ligand>
        <name>a divalent metal cation</name>
        <dbReference type="ChEBI" id="CHEBI:60240"/>
    </ligand>
</feature>
<organism>
    <name type="scientific">Bartonella henselae (strain ATCC 49882 / DSM 28221 / CCUG 30454 / Houston 1)</name>
    <name type="common">Rochalimaea henselae</name>
    <dbReference type="NCBI Taxonomy" id="283166"/>
    <lineage>
        <taxon>Bacteria</taxon>
        <taxon>Pseudomonadati</taxon>
        <taxon>Pseudomonadota</taxon>
        <taxon>Alphaproteobacteria</taxon>
        <taxon>Hyphomicrobiales</taxon>
        <taxon>Bartonellaceae</taxon>
        <taxon>Bartonella</taxon>
    </lineage>
</organism>
<gene>
    <name evidence="1" type="primary">rnhB</name>
    <name type="ordered locus">BH04230</name>
</gene>
<keyword id="KW-0963">Cytoplasm</keyword>
<keyword id="KW-0255">Endonuclease</keyword>
<keyword id="KW-0378">Hydrolase</keyword>
<keyword id="KW-0464">Manganese</keyword>
<keyword id="KW-0479">Metal-binding</keyword>
<keyword id="KW-0540">Nuclease</keyword>
<accession>Q6G4E3</accession>